<sequence length="129" mass="14209">MKKLGILNRDIARVLASLGHTDQIVIADCGLPIPSNVECIDLSIRLGVPNFVDVLTEVLADMEVELMMAATEVRTESPSIHQELENRQISIRYLPHDELKAETSKAKAIIRTGECAPYANVILRAGVIF</sequence>
<organism>
    <name type="scientific">Shouchella clausii (strain KSM-K16)</name>
    <name type="common">Alkalihalobacillus clausii</name>
    <dbReference type="NCBI Taxonomy" id="66692"/>
    <lineage>
        <taxon>Bacteria</taxon>
        <taxon>Bacillati</taxon>
        <taxon>Bacillota</taxon>
        <taxon>Bacilli</taxon>
        <taxon>Bacillales</taxon>
        <taxon>Bacillaceae</taxon>
        <taxon>Shouchella</taxon>
    </lineage>
</organism>
<evidence type="ECO:0000255" key="1">
    <source>
        <dbReference type="HAMAP-Rule" id="MF_01661"/>
    </source>
</evidence>
<feature type="chain" id="PRO_0000346175" description="D-ribose pyranase">
    <location>
        <begin position="1"/>
        <end position="129"/>
    </location>
</feature>
<feature type="active site" description="Proton donor" evidence="1">
    <location>
        <position position="20"/>
    </location>
</feature>
<feature type="binding site" evidence="1">
    <location>
        <position position="28"/>
    </location>
    <ligand>
        <name>substrate</name>
    </ligand>
</feature>
<feature type="binding site" evidence="1">
    <location>
        <position position="96"/>
    </location>
    <ligand>
        <name>substrate</name>
    </ligand>
</feature>
<feature type="binding site" evidence="1">
    <location>
        <begin position="118"/>
        <end position="120"/>
    </location>
    <ligand>
        <name>substrate</name>
    </ligand>
</feature>
<keyword id="KW-0119">Carbohydrate metabolism</keyword>
<keyword id="KW-0963">Cytoplasm</keyword>
<keyword id="KW-0413">Isomerase</keyword>
<keyword id="KW-1185">Reference proteome</keyword>
<dbReference type="EC" id="5.4.99.62" evidence="1"/>
<dbReference type="EMBL" id="AP006627">
    <property type="protein sequence ID" value="BAD66080.1"/>
    <property type="molecule type" value="Genomic_DNA"/>
</dbReference>
<dbReference type="RefSeq" id="WP_011248385.1">
    <property type="nucleotide sequence ID" value="NC_006582.1"/>
</dbReference>
<dbReference type="SMR" id="Q5WC30"/>
<dbReference type="STRING" id="66692.ABC3547"/>
<dbReference type="KEGG" id="bcl:ABC3547"/>
<dbReference type="eggNOG" id="COG1869">
    <property type="taxonomic scope" value="Bacteria"/>
</dbReference>
<dbReference type="HOGENOM" id="CLU_135498_0_0_9"/>
<dbReference type="OrthoDB" id="9805009at2"/>
<dbReference type="UniPathway" id="UPA00916">
    <property type="reaction ID" value="UER00888"/>
</dbReference>
<dbReference type="Proteomes" id="UP000001168">
    <property type="component" value="Chromosome"/>
</dbReference>
<dbReference type="GO" id="GO:0005829">
    <property type="term" value="C:cytosol"/>
    <property type="evidence" value="ECO:0007669"/>
    <property type="project" value="TreeGrafter"/>
</dbReference>
<dbReference type="GO" id="GO:0062193">
    <property type="term" value="F:D-ribose pyranase activity"/>
    <property type="evidence" value="ECO:0007669"/>
    <property type="project" value="UniProtKB-EC"/>
</dbReference>
<dbReference type="GO" id="GO:0016872">
    <property type="term" value="F:intramolecular lyase activity"/>
    <property type="evidence" value="ECO:0007669"/>
    <property type="project" value="UniProtKB-UniRule"/>
</dbReference>
<dbReference type="GO" id="GO:0048029">
    <property type="term" value="F:monosaccharide binding"/>
    <property type="evidence" value="ECO:0007669"/>
    <property type="project" value="InterPro"/>
</dbReference>
<dbReference type="GO" id="GO:0019303">
    <property type="term" value="P:D-ribose catabolic process"/>
    <property type="evidence" value="ECO:0007669"/>
    <property type="project" value="UniProtKB-UniRule"/>
</dbReference>
<dbReference type="Gene3D" id="3.40.1650.10">
    <property type="entry name" value="RbsD-like domain"/>
    <property type="match status" value="1"/>
</dbReference>
<dbReference type="HAMAP" id="MF_01661">
    <property type="entry name" value="D_rib_pyranase"/>
    <property type="match status" value="1"/>
</dbReference>
<dbReference type="InterPro" id="IPR023064">
    <property type="entry name" value="D-ribose_pyranase"/>
</dbReference>
<dbReference type="InterPro" id="IPR023750">
    <property type="entry name" value="RbsD-like_sf"/>
</dbReference>
<dbReference type="InterPro" id="IPR007721">
    <property type="entry name" value="RbsD_FucU"/>
</dbReference>
<dbReference type="NCBIfam" id="NF008761">
    <property type="entry name" value="PRK11797.1"/>
    <property type="match status" value="1"/>
</dbReference>
<dbReference type="PANTHER" id="PTHR37831">
    <property type="entry name" value="D-RIBOSE PYRANASE"/>
    <property type="match status" value="1"/>
</dbReference>
<dbReference type="PANTHER" id="PTHR37831:SF1">
    <property type="entry name" value="D-RIBOSE PYRANASE"/>
    <property type="match status" value="1"/>
</dbReference>
<dbReference type="Pfam" id="PF05025">
    <property type="entry name" value="RbsD_FucU"/>
    <property type="match status" value="1"/>
</dbReference>
<dbReference type="SUPFAM" id="SSF102546">
    <property type="entry name" value="RbsD-like"/>
    <property type="match status" value="1"/>
</dbReference>
<name>RBSD_SHOC1</name>
<protein>
    <recommendedName>
        <fullName evidence="1">D-ribose pyranase</fullName>
        <ecNumber evidence="1">5.4.99.62</ecNumber>
    </recommendedName>
</protein>
<accession>Q5WC30</accession>
<comment type="function">
    <text evidence="1">Catalyzes the interconversion of beta-pyran and beta-furan forms of D-ribose.</text>
</comment>
<comment type="catalytic activity">
    <reaction evidence="1">
        <text>beta-D-ribopyranose = beta-D-ribofuranose</text>
        <dbReference type="Rhea" id="RHEA:25432"/>
        <dbReference type="ChEBI" id="CHEBI:27476"/>
        <dbReference type="ChEBI" id="CHEBI:47002"/>
        <dbReference type="EC" id="5.4.99.62"/>
    </reaction>
</comment>
<comment type="pathway">
    <text evidence="1">Carbohydrate metabolism; D-ribose degradation; D-ribose 5-phosphate from beta-D-ribopyranose: step 1/2.</text>
</comment>
<comment type="subunit">
    <text evidence="1">Homodecamer.</text>
</comment>
<comment type="subcellular location">
    <subcellularLocation>
        <location evidence="1">Cytoplasm</location>
    </subcellularLocation>
</comment>
<comment type="similarity">
    <text evidence="1">Belongs to the RbsD / FucU family. RbsD subfamily.</text>
</comment>
<proteinExistence type="inferred from homology"/>
<reference key="1">
    <citation type="submission" date="2003-10" db="EMBL/GenBank/DDBJ databases">
        <title>The complete genome sequence of the alkaliphilic Bacillus clausii KSM-K16.</title>
        <authorList>
            <person name="Takaki Y."/>
            <person name="Kageyama Y."/>
            <person name="Shimamura S."/>
            <person name="Suzuki H."/>
            <person name="Nishi S."/>
            <person name="Hatada Y."/>
            <person name="Kawai S."/>
            <person name="Ito S."/>
            <person name="Horikoshi K."/>
        </authorList>
    </citation>
    <scope>NUCLEOTIDE SEQUENCE [LARGE SCALE GENOMIC DNA]</scope>
    <source>
        <strain>KSM-K16</strain>
    </source>
</reference>
<gene>
    <name evidence="1" type="primary">rbsD</name>
    <name type="ordered locus">ABC3547</name>
</gene>